<keyword id="KW-0156">Chromatin regulator</keyword>
<keyword id="KW-0175">Coiled coil</keyword>
<keyword id="KW-0479">Metal-binding</keyword>
<keyword id="KW-0914">Notch signaling pathway</keyword>
<keyword id="KW-0539">Nucleus</keyword>
<keyword id="KW-0597">Phosphoprotein</keyword>
<keyword id="KW-1185">Reference proteome</keyword>
<keyword id="KW-0808">Transferase</keyword>
<keyword id="KW-0833">Ubl conjugation pathway</keyword>
<keyword id="KW-0862">Zinc</keyword>
<keyword id="KW-0863">Zinc-finger</keyword>
<proteinExistence type="evidence at protein level"/>
<reference evidence="11" key="1">
    <citation type="journal article" date="2000" name="Science">
        <title>The genome sequence of Drosophila melanogaster.</title>
        <authorList>
            <person name="Adams M.D."/>
            <person name="Celniker S.E."/>
            <person name="Holt R.A."/>
            <person name="Evans C.A."/>
            <person name="Gocayne J.D."/>
            <person name="Amanatides P.G."/>
            <person name="Scherer S.E."/>
            <person name="Li P.W."/>
            <person name="Hoskins R.A."/>
            <person name="Galle R.F."/>
            <person name="George R.A."/>
            <person name="Lewis S.E."/>
            <person name="Richards S."/>
            <person name="Ashburner M."/>
            <person name="Henderson S.N."/>
            <person name="Sutton G.G."/>
            <person name="Wortman J.R."/>
            <person name="Yandell M.D."/>
            <person name="Zhang Q."/>
            <person name="Chen L.X."/>
            <person name="Brandon R.C."/>
            <person name="Rogers Y.-H.C."/>
            <person name="Blazej R.G."/>
            <person name="Champe M."/>
            <person name="Pfeiffer B.D."/>
            <person name="Wan K.H."/>
            <person name="Doyle C."/>
            <person name="Baxter E.G."/>
            <person name="Helt G."/>
            <person name="Nelson C.R."/>
            <person name="Miklos G.L.G."/>
            <person name="Abril J.F."/>
            <person name="Agbayani A."/>
            <person name="An H.-J."/>
            <person name="Andrews-Pfannkoch C."/>
            <person name="Baldwin D."/>
            <person name="Ballew R.M."/>
            <person name="Basu A."/>
            <person name="Baxendale J."/>
            <person name="Bayraktaroglu L."/>
            <person name="Beasley E.M."/>
            <person name="Beeson K.Y."/>
            <person name="Benos P.V."/>
            <person name="Berman B.P."/>
            <person name="Bhandari D."/>
            <person name="Bolshakov S."/>
            <person name="Borkova D."/>
            <person name="Botchan M.R."/>
            <person name="Bouck J."/>
            <person name="Brokstein P."/>
            <person name="Brottier P."/>
            <person name="Burtis K.C."/>
            <person name="Busam D.A."/>
            <person name="Butler H."/>
            <person name="Cadieu E."/>
            <person name="Center A."/>
            <person name="Chandra I."/>
            <person name="Cherry J.M."/>
            <person name="Cawley S."/>
            <person name="Dahlke C."/>
            <person name="Davenport L.B."/>
            <person name="Davies P."/>
            <person name="de Pablos B."/>
            <person name="Delcher A."/>
            <person name="Deng Z."/>
            <person name="Mays A.D."/>
            <person name="Dew I."/>
            <person name="Dietz S.M."/>
            <person name="Dodson K."/>
            <person name="Doup L.E."/>
            <person name="Downes M."/>
            <person name="Dugan-Rocha S."/>
            <person name="Dunkov B.C."/>
            <person name="Dunn P."/>
            <person name="Durbin K.J."/>
            <person name="Evangelista C.C."/>
            <person name="Ferraz C."/>
            <person name="Ferriera S."/>
            <person name="Fleischmann W."/>
            <person name="Fosler C."/>
            <person name="Gabrielian A.E."/>
            <person name="Garg N.S."/>
            <person name="Gelbart W.M."/>
            <person name="Glasser K."/>
            <person name="Glodek A."/>
            <person name="Gong F."/>
            <person name="Gorrell J.H."/>
            <person name="Gu Z."/>
            <person name="Guan P."/>
            <person name="Harris M."/>
            <person name="Harris N.L."/>
            <person name="Harvey D.A."/>
            <person name="Heiman T.J."/>
            <person name="Hernandez J.R."/>
            <person name="Houck J."/>
            <person name="Hostin D."/>
            <person name="Houston K.A."/>
            <person name="Howland T.J."/>
            <person name="Wei M.-H."/>
            <person name="Ibegwam C."/>
            <person name="Jalali M."/>
            <person name="Kalush F."/>
            <person name="Karpen G.H."/>
            <person name="Ke Z."/>
            <person name="Kennison J.A."/>
            <person name="Ketchum K.A."/>
            <person name="Kimmel B.E."/>
            <person name="Kodira C.D."/>
            <person name="Kraft C.L."/>
            <person name="Kravitz S."/>
            <person name="Kulp D."/>
            <person name="Lai Z."/>
            <person name="Lasko P."/>
            <person name="Lei Y."/>
            <person name="Levitsky A.A."/>
            <person name="Li J.H."/>
            <person name="Li Z."/>
            <person name="Liang Y."/>
            <person name="Lin X."/>
            <person name="Liu X."/>
            <person name="Mattei B."/>
            <person name="McIntosh T.C."/>
            <person name="McLeod M.P."/>
            <person name="McPherson D."/>
            <person name="Merkulov G."/>
            <person name="Milshina N.V."/>
            <person name="Mobarry C."/>
            <person name="Morris J."/>
            <person name="Moshrefi A."/>
            <person name="Mount S.M."/>
            <person name="Moy M."/>
            <person name="Murphy B."/>
            <person name="Murphy L."/>
            <person name="Muzny D.M."/>
            <person name="Nelson D.L."/>
            <person name="Nelson D.R."/>
            <person name="Nelson K.A."/>
            <person name="Nixon K."/>
            <person name="Nusskern D.R."/>
            <person name="Pacleb J.M."/>
            <person name="Palazzolo M."/>
            <person name="Pittman G.S."/>
            <person name="Pan S."/>
            <person name="Pollard J."/>
            <person name="Puri V."/>
            <person name="Reese M.G."/>
            <person name="Reinert K."/>
            <person name="Remington K."/>
            <person name="Saunders R.D.C."/>
            <person name="Scheeler F."/>
            <person name="Shen H."/>
            <person name="Shue B.C."/>
            <person name="Siden-Kiamos I."/>
            <person name="Simpson M."/>
            <person name="Skupski M.P."/>
            <person name="Smith T.J."/>
            <person name="Spier E."/>
            <person name="Spradling A.C."/>
            <person name="Stapleton M."/>
            <person name="Strong R."/>
            <person name="Sun E."/>
            <person name="Svirskas R."/>
            <person name="Tector C."/>
            <person name="Turner R."/>
            <person name="Venter E."/>
            <person name="Wang A.H."/>
            <person name="Wang X."/>
            <person name="Wang Z.-Y."/>
            <person name="Wassarman D.A."/>
            <person name="Weinstock G.M."/>
            <person name="Weissenbach J."/>
            <person name="Williams S.M."/>
            <person name="Woodage T."/>
            <person name="Worley K.C."/>
            <person name="Wu D."/>
            <person name="Yang S."/>
            <person name="Yao Q.A."/>
            <person name="Ye J."/>
            <person name="Yeh R.-F."/>
            <person name="Zaveri J.S."/>
            <person name="Zhan M."/>
            <person name="Zhang G."/>
            <person name="Zhao Q."/>
            <person name="Zheng L."/>
            <person name="Zheng X.H."/>
            <person name="Zhong F.N."/>
            <person name="Zhong W."/>
            <person name="Zhou X."/>
            <person name="Zhu S.C."/>
            <person name="Zhu X."/>
            <person name="Smith H.O."/>
            <person name="Gibbs R.A."/>
            <person name="Myers E.W."/>
            <person name="Rubin G.M."/>
            <person name="Venter J.C."/>
        </authorList>
    </citation>
    <scope>NUCLEOTIDE SEQUENCE [LARGE SCALE GENOMIC DNA]</scope>
    <source>
        <strain evidence="6">Berkeley</strain>
    </source>
</reference>
<reference evidence="10 11" key="2">
    <citation type="journal article" date="2002" name="Genome Biol.">
        <title>Annotation of the Drosophila melanogaster euchromatic genome: a systematic review.</title>
        <authorList>
            <person name="Misra S."/>
            <person name="Crosby M.A."/>
            <person name="Mungall C.J."/>
            <person name="Matthews B.B."/>
            <person name="Campbell K.S."/>
            <person name="Hradecky P."/>
            <person name="Huang Y."/>
            <person name="Kaminker J.S."/>
            <person name="Millburn G.H."/>
            <person name="Prochnik S.E."/>
            <person name="Smith C.D."/>
            <person name="Tupy J.L."/>
            <person name="Whitfield E.J."/>
            <person name="Bayraktaroglu L."/>
            <person name="Berman B.P."/>
            <person name="Bettencourt B.R."/>
            <person name="Celniker S.E."/>
            <person name="de Grey A.D.N.J."/>
            <person name="Drysdale R.A."/>
            <person name="Harris N.L."/>
            <person name="Richter J."/>
            <person name="Russo S."/>
            <person name="Schroeder A.J."/>
            <person name="Shu S.Q."/>
            <person name="Stapleton M."/>
            <person name="Yamada C."/>
            <person name="Ashburner M."/>
            <person name="Gelbart W.M."/>
            <person name="Rubin G.M."/>
            <person name="Lewis S.E."/>
        </authorList>
    </citation>
    <scope>GENOME REANNOTATION</scope>
    <source>
        <strain>Berkeley</strain>
    </source>
</reference>
<reference evidence="10 12" key="3">
    <citation type="journal article" date="2002" name="Genome Biol.">
        <title>A Drosophila full-length cDNA resource.</title>
        <authorList>
            <person name="Stapleton M."/>
            <person name="Carlson J.W."/>
            <person name="Brokstein P."/>
            <person name="Yu C."/>
            <person name="Champe M."/>
            <person name="George R.A."/>
            <person name="Guarin H."/>
            <person name="Kronmiller B."/>
            <person name="Pacleb J.M."/>
            <person name="Park S."/>
            <person name="Wan K.H."/>
            <person name="Rubin G.M."/>
            <person name="Celniker S.E."/>
        </authorList>
    </citation>
    <scope>NUCLEOTIDE SEQUENCE [LARGE SCALE MRNA]</scope>
    <source>
        <strain evidence="12">Berkeley</strain>
        <tissue evidence="7">Embryo</tissue>
    </source>
</reference>
<reference key="4">
    <citation type="submission" date="2009-04" db="EMBL/GenBank/DDBJ databases">
        <authorList>
            <person name="Carlson J.W."/>
            <person name="Booth B."/>
            <person name="Frise E."/>
            <person name="Park S."/>
            <person name="Wan K.H."/>
            <person name="Yu C."/>
            <person name="Celniker S.E."/>
        </authorList>
    </citation>
    <scope>NUCLEOTIDE SEQUENCE [LARGE SCALE MRNA]</scope>
    <source>
        <strain>Berkeley</strain>
    </source>
</reference>
<reference key="5">
    <citation type="journal article" date="2005" name="Dev. Cell">
        <title>Bre1 is required for Notch signaling and histone modification.</title>
        <authorList>
            <person name="Bray S."/>
            <person name="Musisi H."/>
            <person name="Bienz M."/>
        </authorList>
    </citation>
    <scope>FUNCTION</scope>
    <scope>SUBCELLULAR LOCATION</scope>
</reference>
<reference key="6">
    <citation type="journal article" date="2008" name="J. Proteome Res.">
        <title>Phosphoproteome analysis of Drosophila melanogaster embryos.</title>
        <authorList>
            <person name="Zhai B."/>
            <person name="Villen J."/>
            <person name="Beausoleil S.A."/>
            <person name="Mintseris J."/>
            <person name="Gygi S.P."/>
        </authorList>
    </citation>
    <scope>PHOSPHORYLATION [LARGE SCALE ANALYSIS] AT THR-242; SER-243; SER-632 AND SER-638</scope>
    <scope>IDENTIFICATION BY MASS SPECTROMETRY</scope>
    <source>
        <tissue>Embryo</tissue>
    </source>
</reference>
<feature type="chain" id="PRO_0000055846" description="E3 ubiquitin-protein ligase Bre1">
    <location>
        <begin position="1"/>
        <end position="1044"/>
    </location>
</feature>
<feature type="zinc finger region" description="RING-type" evidence="4">
    <location>
        <begin position="991"/>
        <end position="1030"/>
    </location>
</feature>
<feature type="region of interest" description="Disordered" evidence="5">
    <location>
        <begin position="182"/>
        <end position="214"/>
    </location>
</feature>
<feature type="region of interest" description="Disordered" evidence="5">
    <location>
        <begin position="312"/>
        <end position="335"/>
    </location>
</feature>
<feature type="region of interest" description="Disordered" evidence="5">
    <location>
        <begin position="546"/>
        <end position="586"/>
    </location>
</feature>
<feature type="region of interest" description="Disordered" evidence="5">
    <location>
        <begin position="615"/>
        <end position="664"/>
    </location>
</feature>
<feature type="coiled-coil region" evidence="3">
    <location>
        <begin position="43"/>
        <end position="81"/>
    </location>
</feature>
<feature type="coiled-coil region" evidence="3">
    <location>
        <begin position="218"/>
        <end position="386"/>
    </location>
</feature>
<feature type="coiled-coil region" evidence="3">
    <location>
        <begin position="417"/>
        <end position="546"/>
    </location>
</feature>
<feature type="coiled-coil region" evidence="3">
    <location>
        <begin position="664"/>
        <end position="767"/>
    </location>
</feature>
<feature type="coiled-coil region" evidence="3">
    <location>
        <begin position="794"/>
        <end position="970"/>
    </location>
</feature>
<feature type="compositionally biased region" description="Low complexity" evidence="5">
    <location>
        <begin position="320"/>
        <end position="335"/>
    </location>
</feature>
<feature type="compositionally biased region" description="Basic and acidic residues" evidence="5">
    <location>
        <begin position="552"/>
        <end position="566"/>
    </location>
</feature>
<feature type="compositionally biased region" description="Polar residues" evidence="5">
    <location>
        <begin position="567"/>
        <end position="586"/>
    </location>
</feature>
<feature type="compositionally biased region" description="Basic and acidic residues" evidence="5">
    <location>
        <begin position="615"/>
        <end position="632"/>
    </location>
</feature>
<feature type="compositionally biased region" description="Polar residues" evidence="5">
    <location>
        <begin position="635"/>
        <end position="647"/>
    </location>
</feature>
<feature type="compositionally biased region" description="Basic and acidic residues" evidence="5">
    <location>
        <begin position="649"/>
        <end position="664"/>
    </location>
</feature>
<feature type="modified residue" description="Phosphothreonine" evidence="9">
    <location>
        <position position="242"/>
    </location>
</feature>
<feature type="modified residue" description="Phosphoserine" evidence="9">
    <location>
        <position position="243"/>
    </location>
</feature>
<feature type="modified residue" description="Phosphoserine" evidence="9">
    <location>
        <position position="632"/>
    </location>
</feature>
<feature type="modified residue" description="Phosphoserine" evidence="9">
    <location>
        <position position="638"/>
    </location>
</feature>
<feature type="sequence conflict" description="In Ref. 3; AAN71372." evidence="10" ref="3">
    <original>A</original>
    <variation>V</variation>
    <location>
        <position position="17"/>
    </location>
</feature>
<evidence type="ECO:0000250" key="1"/>
<evidence type="ECO:0000250" key="2">
    <source>
        <dbReference type="UniProtKB" id="O75150"/>
    </source>
</evidence>
<evidence type="ECO:0000255" key="3"/>
<evidence type="ECO:0000255" key="4">
    <source>
        <dbReference type="PROSITE-ProRule" id="PRU00175"/>
    </source>
</evidence>
<evidence type="ECO:0000256" key="5">
    <source>
        <dbReference type="SAM" id="MobiDB-lite"/>
    </source>
</evidence>
<evidence type="ECO:0000269" key="6">
    <source>
    </source>
</evidence>
<evidence type="ECO:0000269" key="7">
    <source>
    </source>
</evidence>
<evidence type="ECO:0000269" key="8">
    <source>
    </source>
</evidence>
<evidence type="ECO:0000269" key="9">
    <source>
    </source>
</evidence>
<evidence type="ECO:0000305" key="10"/>
<evidence type="ECO:0000312" key="11">
    <source>
        <dbReference type="EMBL" id="AAF50744.2"/>
    </source>
</evidence>
<evidence type="ECO:0000312" key="12">
    <source>
        <dbReference type="EMBL" id="AAN71372.1"/>
    </source>
</evidence>
<organism>
    <name type="scientific">Drosophila melanogaster</name>
    <name type="common">Fruit fly</name>
    <dbReference type="NCBI Taxonomy" id="7227"/>
    <lineage>
        <taxon>Eukaryota</taxon>
        <taxon>Metazoa</taxon>
        <taxon>Ecdysozoa</taxon>
        <taxon>Arthropoda</taxon>
        <taxon>Hexapoda</taxon>
        <taxon>Insecta</taxon>
        <taxon>Pterygota</taxon>
        <taxon>Neoptera</taxon>
        <taxon>Endopterygota</taxon>
        <taxon>Diptera</taxon>
        <taxon>Brachycera</taxon>
        <taxon>Muscomorpha</taxon>
        <taxon>Ephydroidea</taxon>
        <taxon>Drosophilidae</taxon>
        <taxon>Drosophila</taxon>
        <taxon>Sophophora</taxon>
    </lineage>
</organism>
<gene>
    <name type="primary">Bre1</name>
    <name type="ORF">CG10542</name>
</gene>
<protein>
    <recommendedName>
        <fullName>E3 ubiquitin-protein ligase Bre1</fullName>
        <ecNumber evidence="2">2.3.2.27</ecNumber>
    </recommendedName>
    <alternativeName>
        <fullName evidence="10">RING-type E3 ubiquitin transferase Bre1</fullName>
    </alternativeName>
    <alternativeName>
        <fullName>dBre1</fullName>
    </alternativeName>
</protein>
<sequence length="1044" mass="119060">MSKRSADDATGSSCLVAAAAAGQPPIKKVHFEPHLIGPVSTLEEMDIKVLEFQNKKLAQRIEQRMRTEAELRHRIEQLEKRQTQDDAVLNVVNRYWNQLNEDIRVLLQRFDAETADELENRNENEVTTSFLAQLSTWDKEELDEKLANRVQVSKRAVAKIVQVIDRLMQRNEKITHVLKGDSLASAGSGSGAGAGGEEEQQQASGDAETTTSSAGVHALEETLKQTHIEIMSENHKLQNLNTSLHEKFHTMSLKMKEYQDAHTAKETENAELKNQIDELQYDLEKIHCRNDKLENHLAEAIEKLKAYHQIYGDPNKSTNSAKTPTTTGSGGATTSVNSQLLEELQKELEEYRELANNRLQELDKLHATHRETLKEVEKLKMDIRQLPESVIVETTEYKCLQSQFSVLYNESMQIKTMLDETRNQLQTSKNQHLRQIEVMESEELIAQKKVRSEMIQMEDVLALIRKEYETLRIEFEQNMAANEQTAPINREMRHLITSLQNHNGQLKGEVQRYKRKYKDTSTDNLKLRQELADALATLEGNKLQAATGAAGEEIKQENSTGVKEENSNNVSASGQTNQTNSGNDTNVAIKEENHISAEDEADDEASGKDVKDGIKQEKLSSGDAAAAEKKDSPGPGNSTSSATNSVPVKNEKDSKDGVKGKDVKAVESETVRDLKAQLKKALNDQKEMKLLLDMYKGVSKDQRDKVQLMATEKKLRSEIEELRQQLKKLQESKREERKKLADEEALRKIKQLEEQKYELQKQMANHKPTDNSWGSGAPGTANYTRPFVGSHEEEALLNEMEVTGQAFEDMQEQNSRLIQQLREKDDANFKLMSERIKANQLHKLLREEKTVLEDQMATATTQIEAMHIVLRKLEEKERSLQATVASIEKELMLRQQAMEMHKRKAIESAQSAADLKLHLEKYHAQMKEAQQVVAEKTSSLEAEAYKTKRLQEELAQFKRKAERMKKMEMSGTTIDEVMIEEIREYKETLTCPSCKVKRKDAVLSKCFHVFCYDCLRTRYETRQRKCPKCNCAFGANDYHRLYLQ</sequence>
<name>BRE1_DROME</name>
<comment type="function">
    <text evidence="8">E3 ubiquitin-protein ligase that mediates monoubiquitination of 'Lys-117' of histone H2B. H2B 'Lys-117' ubiquitination gives a specific tag for epigenetic transcriptional activation and is also prerequisite for histone H3 'Lys-4' and 'Lys-79' methylation. It thereby plays a central role in histone code and gene regulation. Required for the expression of Notch target genes in development by affecting the levels of Su(H) in imaginal disk cells and stimulating the Su(H)-mediated transcription of Notch-specific genes.</text>
</comment>
<comment type="catalytic activity">
    <reaction evidence="2">
        <text>S-ubiquitinyl-[E2 ubiquitin-conjugating enzyme]-L-cysteine + [acceptor protein]-L-lysine = [E2 ubiquitin-conjugating enzyme]-L-cysteine + N(6)-ubiquitinyl-[acceptor protein]-L-lysine.</text>
        <dbReference type="EC" id="2.3.2.27"/>
    </reaction>
</comment>
<comment type="pathway">
    <text>Protein modification; protein ubiquitination.</text>
</comment>
<comment type="subcellular location">
    <subcellularLocation>
        <location evidence="1">Nucleus</location>
    </subcellularLocation>
</comment>
<comment type="similarity">
    <text evidence="10">Belongs to the BRE1 family.</text>
</comment>
<comment type="sequence caution" evidence="10">
    <conflict type="erroneous initiation">
        <sequence resource="EMBL-CDS" id="AAL13880"/>
    </conflict>
</comment>
<accession>Q9VRP9</accession>
<accession>C3KGI2</accession>
<accession>Q8IGT1</accession>
<accession>Q95TN7</accession>
<dbReference type="EC" id="2.3.2.27" evidence="2"/>
<dbReference type="EMBL" id="AE014296">
    <property type="protein sequence ID" value="AAF50744.2"/>
    <property type="molecule type" value="Genomic_DNA"/>
</dbReference>
<dbReference type="EMBL" id="AY058651">
    <property type="protein sequence ID" value="AAL13880.1"/>
    <property type="status" value="ALT_INIT"/>
    <property type="molecule type" value="mRNA"/>
</dbReference>
<dbReference type="EMBL" id="BT001617">
    <property type="protein sequence ID" value="AAN71372.1"/>
    <property type="molecule type" value="mRNA"/>
</dbReference>
<dbReference type="EMBL" id="BT082047">
    <property type="protein sequence ID" value="ACO95725.1"/>
    <property type="molecule type" value="mRNA"/>
</dbReference>
<dbReference type="RefSeq" id="NP_001286950.1">
    <property type="nucleotide sequence ID" value="NM_001300021.1"/>
</dbReference>
<dbReference type="RefSeq" id="NP_647989.2">
    <property type="nucleotide sequence ID" value="NM_139732.3"/>
</dbReference>
<dbReference type="SMR" id="Q9VRP9"/>
<dbReference type="BioGRID" id="64112">
    <property type="interactions" value="9"/>
</dbReference>
<dbReference type="FunCoup" id="Q9VRP9">
    <property type="interactions" value="2684"/>
</dbReference>
<dbReference type="IntAct" id="Q9VRP9">
    <property type="interactions" value="7"/>
</dbReference>
<dbReference type="STRING" id="7227.FBpp0310889"/>
<dbReference type="iPTMnet" id="Q9VRP9"/>
<dbReference type="PaxDb" id="7227-FBpp0076822"/>
<dbReference type="DNASU" id="38652"/>
<dbReference type="EnsemblMetazoa" id="FBtr0077116">
    <property type="protein sequence ID" value="FBpp0076822"/>
    <property type="gene ID" value="FBgn0086694"/>
</dbReference>
<dbReference type="EnsemblMetazoa" id="FBtr0344538">
    <property type="protein sequence ID" value="FBpp0310889"/>
    <property type="gene ID" value="FBgn0086694"/>
</dbReference>
<dbReference type="GeneID" id="38652"/>
<dbReference type="KEGG" id="dme:Dmel_CG10542"/>
<dbReference type="AGR" id="FB:FBgn0086694"/>
<dbReference type="CTD" id="38652"/>
<dbReference type="FlyBase" id="FBgn0086694">
    <property type="gene designation" value="Bre1"/>
</dbReference>
<dbReference type="VEuPathDB" id="VectorBase:FBgn0086694"/>
<dbReference type="eggNOG" id="KOG0978">
    <property type="taxonomic scope" value="Eukaryota"/>
</dbReference>
<dbReference type="HOGENOM" id="CLU_002640_0_0_1"/>
<dbReference type="InParanoid" id="Q9VRP9"/>
<dbReference type="OMA" id="THIEIMT"/>
<dbReference type="OrthoDB" id="10266039at2759"/>
<dbReference type="PhylomeDB" id="Q9VRP9"/>
<dbReference type="Reactome" id="R-DME-8866654">
    <property type="pathway name" value="E3 ubiquitin ligases ubiquitinate target proteins"/>
</dbReference>
<dbReference type="Reactome" id="R-DME-9013422">
    <property type="pathway name" value="RHOBTB1 GTPase cycle"/>
</dbReference>
<dbReference type="SignaLink" id="Q9VRP9"/>
<dbReference type="UniPathway" id="UPA00143"/>
<dbReference type="BioGRID-ORCS" id="38652">
    <property type="hits" value="1 hit in 3 CRISPR screens"/>
</dbReference>
<dbReference type="ChiTaRS" id="Bre1">
    <property type="organism name" value="fly"/>
</dbReference>
<dbReference type="GenomeRNAi" id="38652"/>
<dbReference type="PRO" id="PR:Q9VRP9"/>
<dbReference type="Proteomes" id="UP000000803">
    <property type="component" value="Chromosome 3L"/>
</dbReference>
<dbReference type="Bgee" id="FBgn0086694">
    <property type="expression patterns" value="Expressed in egg cell and 122 other cell types or tissues"/>
</dbReference>
<dbReference type="ExpressionAtlas" id="Q9VRP9">
    <property type="expression patterns" value="baseline and differential"/>
</dbReference>
<dbReference type="GO" id="GO:0000785">
    <property type="term" value="C:chromatin"/>
    <property type="evidence" value="ECO:0000250"/>
    <property type="project" value="FlyBase"/>
</dbReference>
<dbReference type="GO" id="GO:0033503">
    <property type="term" value="C:HULC complex"/>
    <property type="evidence" value="ECO:0000318"/>
    <property type="project" value="GO_Central"/>
</dbReference>
<dbReference type="GO" id="GO:0005634">
    <property type="term" value="C:nucleus"/>
    <property type="evidence" value="ECO:0000314"/>
    <property type="project" value="UniProtKB"/>
</dbReference>
<dbReference type="GO" id="GO:0061630">
    <property type="term" value="F:ubiquitin protein ligase activity"/>
    <property type="evidence" value="ECO:0000315"/>
    <property type="project" value="FlyBase"/>
</dbReference>
<dbReference type="GO" id="GO:0008270">
    <property type="term" value="F:zinc ion binding"/>
    <property type="evidence" value="ECO:0000255"/>
    <property type="project" value="FlyBase"/>
</dbReference>
<dbReference type="GO" id="GO:0006325">
    <property type="term" value="P:chromatin organization"/>
    <property type="evidence" value="ECO:0000315"/>
    <property type="project" value="UniProtKB"/>
</dbReference>
<dbReference type="GO" id="GO:0031452">
    <property type="term" value="P:negative regulation of heterochromatin formation"/>
    <property type="evidence" value="ECO:0000315"/>
    <property type="project" value="FlyBase"/>
</dbReference>
<dbReference type="GO" id="GO:0007219">
    <property type="term" value="P:Notch signaling pathway"/>
    <property type="evidence" value="ECO:0007669"/>
    <property type="project" value="UniProtKB-KW"/>
</dbReference>
<dbReference type="GO" id="GO:0045597">
    <property type="term" value="P:positive regulation of cell differentiation"/>
    <property type="evidence" value="ECO:0000315"/>
    <property type="project" value="FlyBase"/>
</dbReference>
<dbReference type="GO" id="GO:0045893">
    <property type="term" value="P:positive regulation of DNA-templated transcription"/>
    <property type="evidence" value="ECO:0000315"/>
    <property type="project" value="FlyBase"/>
</dbReference>
<dbReference type="GO" id="GO:0043161">
    <property type="term" value="P:proteasome-mediated ubiquitin-dependent protein catabolic process"/>
    <property type="evidence" value="ECO:0000315"/>
    <property type="project" value="FlyBase"/>
</dbReference>
<dbReference type="GO" id="GO:0006513">
    <property type="term" value="P:protein monoubiquitination"/>
    <property type="evidence" value="ECO:0000315"/>
    <property type="project" value="UniProtKB"/>
</dbReference>
<dbReference type="CDD" id="cd16705">
    <property type="entry name" value="RING-HC_dBre1-like"/>
    <property type="match status" value="1"/>
</dbReference>
<dbReference type="FunFam" id="3.30.40.10:FF:000040">
    <property type="entry name" value="E3 ubiquitin protein ligase"/>
    <property type="match status" value="1"/>
</dbReference>
<dbReference type="Gene3D" id="3.30.40.10">
    <property type="entry name" value="Zinc/RING finger domain, C3HC4 (zinc finger)"/>
    <property type="match status" value="1"/>
</dbReference>
<dbReference type="InterPro" id="IPR013956">
    <property type="entry name" value="E3_ubiquit_lig_Bre1"/>
</dbReference>
<dbReference type="InterPro" id="IPR018957">
    <property type="entry name" value="Znf_C3HC4_RING-type"/>
</dbReference>
<dbReference type="InterPro" id="IPR001841">
    <property type="entry name" value="Znf_RING"/>
</dbReference>
<dbReference type="InterPro" id="IPR013083">
    <property type="entry name" value="Znf_RING/FYVE/PHD"/>
</dbReference>
<dbReference type="InterPro" id="IPR017907">
    <property type="entry name" value="Znf_RING_CS"/>
</dbReference>
<dbReference type="PANTHER" id="PTHR23163:SF0">
    <property type="entry name" value="E3 UBIQUITIN-PROTEIN LIGASE BRE1"/>
    <property type="match status" value="1"/>
</dbReference>
<dbReference type="PANTHER" id="PTHR23163">
    <property type="entry name" value="RING FINGER PROTEIN-RELATED"/>
    <property type="match status" value="1"/>
</dbReference>
<dbReference type="Pfam" id="PF00097">
    <property type="entry name" value="zf-C3HC4"/>
    <property type="match status" value="1"/>
</dbReference>
<dbReference type="SMART" id="SM00184">
    <property type="entry name" value="RING"/>
    <property type="match status" value="1"/>
</dbReference>
<dbReference type="SUPFAM" id="SSF57850">
    <property type="entry name" value="RING/U-box"/>
    <property type="match status" value="1"/>
</dbReference>
<dbReference type="PROSITE" id="PS00518">
    <property type="entry name" value="ZF_RING_1"/>
    <property type="match status" value="1"/>
</dbReference>
<dbReference type="PROSITE" id="PS50089">
    <property type="entry name" value="ZF_RING_2"/>
    <property type="match status" value="1"/>
</dbReference>